<name>THIO_STAA8</name>
<proteinExistence type="evidence at transcript level"/>
<protein>
    <recommendedName>
        <fullName>Thioredoxin</fullName>
        <shortName>Trx</shortName>
    </recommendedName>
</protein>
<keyword id="KW-1015">Disulfide bond</keyword>
<keyword id="KW-0249">Electron transport</keyword>
<keyword id="KW-0676">Redox-active center</keyword>
<keyword id="KW-1185">Reference proteome</keyword>
<keyword id="KW-0813">Transport</keyword>
<organism>
    <name type="scientific">Staphylococcus aureus (strain NCTC 8325 / PS 47)</name>
    <dbReference type="NCBI Taxonomy" id="93061"/>
    <lineage>
        <taxon>Bacteria</taxon>
        <taxon>Bacillati</taxon>
        <taxon>Bacillota</taxon>
        <taxon>Bacilli</taxon>
        <taxon>Bacillales</taxon>
        <taxon>Staphylococcaceae</taxon>
        <taxon>Staphylococcus</taxon>
    </lineage>
</organism>
<evidence type="ECO:0000250" key="1"/>
<evidence type="ECO:0000255" key="2">
    <source>
        <dbReference type="PROSITE-ProRule" id="PRU00691"/>
    </source>
</evidence>
<evidence type="ECO:0000269" key="3">
    <source>
    </source>
</evidence>
<evidence type="ECO:0000305" key="4"/>
<accession>Q2FZD2</accession>
<sequence length="104" mass="11440">MAIVKVTDADFDSKVESGVQLVDFWATWCGPCKMIAPVLEELAADYEGKADILKLDVDENPSTAAKYEVMSIPTLIVFKDGQPVDKVVGFQPKENLAEVLDKHL</sequence>
<reference key="1">
    <citation type="book" date="2006" name="Gram positive pathogens, 2nd edition">
        <title>The Staphylococcus aureus NCTC 8325 genome.</title>
        <editorList>
            <person name="Fischetti V."/>
            <person name="Novick R."/>
            <person name="Ferretti J."/>
            <person name="Portnoy D."/>
            <person name="Rood J."/>
        </editorList>
        <authorList>
            <person name="Gillaspy A.F."/>
            <person name="Worrell V."/>
            <person name="Orvis J."/>
            <person name="Roe B.A."/>
            <person name="Dyer D.W."/>
            <person name="Iandolo J.J."/>
        </authorList>
    </citation>
    <scope>NUCLEOTIDE SEQUENCE [LARGE SCALE GENOMIC DNA]</scope>
    <source>
        <strain>NCTC 8325 / PS 47</strain>
    </source>
</reference>
<reference key="2">
    <citation type="journal article" date="2004" name="J. Bacteriol.">
        <title>Transcriptional regulation of the Staphylococcus aureus thioredoxin and thioredoxin reductase genes in response to oxygen and disulfide stress.</title>
        <authorList>
            <person name="Uziel O."/>
            <person name="Borovok I."/>
            <person name="Schreiber R."/>
            <person name="Cohen G."/>
            <person name="Aharonowitz Y."/>
        </authorList>
    </citation>
    <scope>INDUCTION</scope>
</reference>
<dbReference type="EMBL" id="CP000253">
    <property type="protein sequence ID" value="ABD30214.1"/>
    <property type="molecule type" value="Genomic_DNA"/>
</dbReference>
<dbReference type="RefSeq" id="WP_001018928.1">
    <property type="nucleotide sequence ID" value="NZ_LS483365.1"/>
</dbReference>
<dbReference type="RefSeq" id="YP_499644.1">
    <property type="nucleotide sequence ID" value="NC_007795.1"/>
</dbReference>
<dbReference type="SMR" id="Q2FZD2"/>
<dbReference type="STRING" id="93061.SAOUHSC_01100"/>
<dbReference type="PaxDb" id="1280-SAXN108_1140"/>
<dbReference type="GeneID" id="3920742"/>
<dbReference type="GeneID" id="98345462"/>
<dbReference type="KEGG" id="sao:SAOUHSC_01100"/>
<dbReference type="PATRIC" id="fig|93061.5.peg.1008"/>
<dbReference type="eggNOG" id="COG3118">
    <property type="taxonomic scope" value="Bacteria"/>
</dbReference>
<dbReference type="HOGENOM" id="CLU_090389_10_2_9"/>
<dbReference type="OrthoDB" id="9790390at2"/>
<dbReference type="PRO" id="PR:Q2FZD2"/>
<dbReference type="Proteomes" id="UP000008816">
    <property type="component" value="Chromosome"/>
</dbReference>
<dbReference type="GO" id="GO:0005737">
    <property type="term" value="C:cytoplasm"/>
    <property type="evidence" value="ECO:0000318"/>
    <property type="project" value="GO_Central"/>
</dbReference>
<dbReference type="GO" id="GO:0005829">
    <property type="term" value="C:cytosol"/>
    <property type="evidence" value="ECO:0000318"/>
    <property type="project" value="GO_Central"/>
</dbReference>
<dbReference type="GO" id="GO:0015035">
    <property type="term" value="F:protein-disulfide reductase activity"/>
    <property type="evidence" value="ECO:0000318"/>
    <property type="project" value="GO_Central"/>
</dbReference>
<dbReference type="GO" id="GO:0045454">
    <property type="term" value="P:cell redox homeostasis"/>
    <property type="evidence" value="ECO:0000318"/>
    <property type="project" value="GO_Central"/>
</dbReference>
<dbReference type="CDD" id="cd02947">
    <property type="entry name" value="TRX_family"/>
    <property type="match status" value="1"/>
</dbReference>
<dbReference type="FunFam" id="3.40.30.10:FF:000001">
    <property type="entry name" value="Thioredoxin"/>
    <property type="match status" value="1"/>
</dbReference>
<dbReference type="Gene3D" id="3.40.30.10">
    <property type="entry name" value="Glutaredoxin"/>
    <property type="match status" value="1"/>
</dbReference>
<dbReference type="InterPro" id="IPR005746">
    <property type="entry name" value="Thioredoxin"/>
</dbReference>
<dbReference type="InterPro" id="IPR036249">
    <property type="entry name" value="Thioredoxin-like_sf"/>
</dbReference>
<dbReference type="InterPro" id="IPR017937">
    <property type="entry name" value="Thioredoxin_CS"/>
</dbReference>
<dbReference type="InterPro" id="IPR013766">
    <property type="entry name" value="Thioredoxin_domain"/>
</dbReference>
<dbReference type="NCBIfam" id="TIGR01068">
    <property type="entry name" value="thioredoxin"/>
    <property type="match status" value="1"/>
</dbReference>
<dbReference type="PANTHER" id="PTHR45663">
    <property type="entry name" value="GEO12009P1"/>
    <property type="match status" value="1"/>
</dbReference>
<dbReference type="PANTHER" id="PTHR45663:SF11">
    <property type="entry name" value="GEO12009P1"/>
    <property type="match status" value="1"/>
</dbReference>
<dbReference type="Pfam" id="PF00085">
    <property type="entry name" value="Thioredoxin"/>
    <property type="match status" value="1"/>
</dbReference>
<dbReference type="PIRSF" id="PIRSF000077">
    <property type="entry name" value="Thioredoxin"/>
    <property type="match status" value="1"/>
</dbReference>
<dbReference type="PRINTS" id="PR00421">
    <property type="entry name" value="THIOREDOXIN"/>
</dbReference>
<dbReference type="SUPFAM" id="SSF52833">
    <property type="entry name" value="Thioredoxin-like"/>
    <property type="match status" value="1"/>
</dbReference>
<dbReference type="PROSITE" id="PS00194">
    <property type="entry name" value="THIOREDOXIN_1"/>
    <property type="match status" value="1"/>
</dbReference>
<dbReference type="PROSITE" id="PS51352">
    <property type="entry name" value="THIOREDOXIN_2"/>
    <property type="match status" value="1"/>
</dbReference>
<comment type="function">
    <text evidence="1">Component of the thioredoxin-thioredoxin reductase system. Participates in various redox reactions through the reversible oxidation of its active center dithiol to a disulfide and catalyzes dithiol-disulfide exchange reactions (By similarity).</text>
</comment>
<comment type="induction">
    <text evidence="3">Induced by diamide, tau-butyl hydroperoxide, and menadione. However, at concentrations above 0.5 mM, menadione has an inhibitory effect on induction of trxA transcription.</text>
</comment>
<comment type="similarity">
    <text evidence="4">Belongs to the thioredoxin family.</text>
</comment>
<gene>
    <name type="primary">trxA</name>
    <name type="ordered locus">SAOUHSC_01100</name>
</gene>
<feature type="chain" id="PRO_0000267205" description="Thioredoxin">
    <location>
        <begin position="1"/>
        <end position="104"/>
    </location>
</feature>
<feature type="domain" description="Thioredoxin" evidence="2">
    <location>
        <begin position="2"/>
        <end position="104"/>
    </location>
</feature>
<feature type="disulfide bond" description="Redox-active" evidence="2">
    <location>
        <begin position="29"/>
        <end position="32"/>
    </location>
</feature>